<gene>
    <name evidence="1" type="primary">cobB3</name>
    <name type="ordered locus">PSPTO_2622</name>
</gene>
<name>NPD3_PSESM</name>
<protein>
    <recommendedName>
        <fullName evidence="1">NAD-dependent protein deacetylase 3</fullName>
        <ecNumber evidence="1 2">2.3.1.286</ecNumber>
    </recommendedName>
    <alternativeName>
        <fullName evidence="1">Regulatory protein SIR2 homolog 3</fullName>
    </alternativeName>
</protein>
<comment type="function">
    <text evidence="1">NAD-dependent protein deacetylase which modulates the activities of several enzymes which are inactive in their acetylated form.</text>
</comment>
<comment type="catalytic activity">
    <reaction evidence="1">
        <text>N(6)-acetyl-L-lysyl-[protein] + NAD(+) + H2O = 2''-O-acetyl-ADP-D-ribose + nicotinamide + L-lysyl-[protein]</text>
        <dbReference type="Rhea" id="RHEA:43636"/>
        <dbReference type="Rhea" id="RHEA-COMP:9752"/>
        <dbReference type="Rhea" id="RHEA-COMP:10731"/>
        <dbReference type="ChEBI" id="CHEBI:15377"/>
        <dbReference type="ChEBI" id="CHEBI:17154"/>
        <dbReference type="ChEBI" id="CHEBI:29969"/>
        <dbReference type="ChEBI" id="CHEBI:57540"/>
        <dbReference type="ChEBI" id="CHEBI:61930"/>
        <dbReference type="ChEBI" id="CHEBI:83767"/>
        <dbReference type="EC" id="2.3.1.286"/>
    </reaction>
</comment>
<comment type="cofactor">
    <cofactor evidence="1">
        <name>Zn(2+)</name>
        <dbReference type="ChEBI" id="CHEBI:29105"/>
    </cofactor>
    <text evidence="1">Binds 1 zinc ion per subunit.</text>
</comment>
<comment type="subcellular location">
    <subcellularLocation>
        <location evidence="1">Cytoplasm</location>
    </subcellularLocation>
</comment>
<comment type="similarity">
    <text evidence="1">Belongs to the sirtuin family. Class II subfamily.</text>
</comment>
<sequence>MLDSPTLDLLDSLRRTMAEKSFLVVTGAGISTASGIPDYRDKDGVRRGAQPMMYQEFVGNPAARQRYWARAMLGWPRISASQANAAHRALAALQAENLIKGLITQNVDALHTQAGSQDVIELHGSLHRVLCLDCQQRSDRTAIQEQMLAHNLYLADVHATQAPDGDTLLDPAYEAGFKVPECPHCQGKRLKPDVVFFGENVASHTAARATLSVEQAEGLLVVGTSLMAWSAFRLCKAMAEQGKPVIAINHGKTRADELLRMKIEAPCEQVLPWLAEQLITR</sequence>
<dbReference type="EC" id="2.3.1.286" evidence="1 2"/>
<dbReference type="EMBL" id="AE016853">
    <property type="protein sequence ID" value="AAO56126.1"/>
    <property type="molecule type" value="Genomic_DNA"/>
</dbReference>
<dbReference type="RefSeq" id="NP_792431.1">
    <property type="nucleotide sequence ID" value="NC_004578.1"/>
</dbReference>
<dbReference type="RefSeq" id="WP_011104113.1">
    <property type="nucleotide sequence ID" value="NC_004578.1"/>
</dbReference>
<dbReference type="SMR" id="Q882K4"/>
<dbReference type="STRING" id="223283.PSPTO_2622"/>
<dbReference type="GeneID" id="1184274"/>
<dbReference type="KEGG" id="pst:PSPTO_2622"/>
<dbReference type="PATRIC" id="fig|223283.9.peg.2670"/>
<dbReference type="eggNOG" id="COG0846">
    <property type="taxonomic scope" value="Bacteria"/>
</dbReference>
<dbReference type="HOGENOM" id="CLU_023643_3_2_6"/>
<dbReference type="OrthoDB" id="9800582at2"/>
<dbReference type="PhylomeDB" id="Q882K4"/>
<dbReference type="Proteomes" id="UP000002515">
    <property type="component" value="Chromosome"/>
</dbReference>
<dbReference type="GO" id="GO:0005737">
    <property type="term" value="C:cytoplasm"/>
    <property type="evidence" value="ECO:0007669"/>
    <property type="project" value="UniProtKB-SubCell"/>
</dbReference>
<dbReference type="GO" id="GO:0017136">
    <property type="term" value="F:histone deacetylase activity, NAD-dependent"/>
    <property type="evidence" value="ECO:0007669"/>
    <property type="project" value="TreeGrafter"/>
</dbReference>
<dbReference type="GO" id="GO:0070403">
    <property type="term" value="F:NAD+ binding"/>
    <property type="evidence" value="ECO:0007669"/>
    <property type="project" value="UniProtKB-UniRule"/>
</dbReference>
<dbReference type="GO" id="GO:0008270">
    <property type="term" value="F:zinc ion binding"/>
    <property type="evidence" value="ECO:0007669"/>
    <property type="project" value="UniProtKB-UniRule"/>
</dbReference>
<dbReference type="CDD" id="cd01409">
    <property type="entry name" value="SIRT4"/>
    <property type="match status" value="1"/>
</dbReference>
<dbReference type="Gene3D" id="3.30.1600.10">
    <property type="entry name" value="SIR2/SIRT2 'Small Domain"/>
    <property type="match status" value="1"/>
</dbReference>
<dbReference type="Gene3D" id="3.40.50.1220">
    <property type="entry name" value="TPP-binding domain"/>
    <property type="match status" value="1"/>
</dbReference>
<dbReference type="HAMAP" id="MF_01967">
    <property type="entry name" value="Sirtuin_ClassII"/>
    <property type="match status" value="1"/>
</dbReference>
<dbReference type="InterPro" id="IPR029035">
    <property type="entry name" value="DHS-like_NAD/FAD-binding_dom"/>
</dbReference>
<dbReference type="InterPro" id="IPR050134">
    <property type="entry name" value="NAD-dep_sirtuin_deacylases"/>
</dbReference>
<dbReference type="InterPro" id="IPR003000">
    <property type="entry name" value="Sirtuin"/>
</dbReference>
<dbReference type="InterPro" id="IPR026591">
    <property type="entry name" value="Sirtuin_cat_small_dom_sf"/>
</dbReference>
<dbReference type="InterPro" id="IPR026587">
    <property type="entry name" value="Sirtuin_class_II"/>
</dbReference>
<dbReference type="InterPro" id="IPR026590">
    <property type="entry name" value="Ssirtuin_cat_dom"/>
</dbReference>
<dbReference type="NCBIfam" id="NF003738">
    <property type="entry name" value="PRK05333.1"/>
    <property type="match status" value="1"/>
</dbReference>
<dbReference type="PANTHER" id="PTHR11085">
    <property type="entry name" value="NAD-DEPENDENT PROTEIN DEACYLASE SIRTUIN-5, MITOCHONDRIAL-RELATED"/>
    <property type="match status" value="1"/>
</dbReference>
<dbReference type="PANTHER" id="PTHR11085:SF10">
    <property type="entry name" value="NAD-DEPENDENT PROTEIN DEACYLASE SIRTUIN-5, MITOCHONDRIAL-RELATED"/>
    <property type="match status" value="1"/>
</dbReference>
<dbReference type="Pfam" id="PF02146">
    <property type="entry name" value="SIR2"/>
    <property type="match status" value="1"/>
</dbReference>
<dbReference type="SUPFAM" id="SSF52467">
    <property type="entry name" value="DHS-like NAD/FAD-binding domain"/>
    <property type="match status" value="1"/>
</dbReference>
<dbReference type="PROSITE" id="PS50305">
    <property type="entry name" value="SIRTUIN"/>
    <property type="match status" value="1"/>
</dbReference>
<evidence type="ECO:0000255" key="1">
    <source>
        <dbReference type="HAMAP-Rule" id="MF_01967"/>
    </source>
</evidence>
<evidence type="ECO:0000255" key="2">
    <source>
        <dbReference type="PROSITE-ProRule" id="PRU00236"/>
    </source>
</evidence>
<organism>
    <name type="scientific">Pseudomonas syringae pv. tomato (strain ATCC BAA-871 / DC3000)</name>
    <dbReference type="NCBI Taxonomy" id="223283"/>
    <lineage>
        <taxon>Bacteria</taxon>
        <taxon>Pseudomonadati</taxon>
        <taxon>Pseudomonadota</taxon>
        <taxon>Gammaproteobacteria</taxon>
        <taxon>Pseudomonadales</taxon>
        <taxon>Pseudomonadaceae</taxon>
        <taxon>Pseudomonas</taxon>
    </lineage>
</organism>
<keyword id="KW-0963">Cytoplasm</keyword>
<keyword id="KW-0479">Metal-binding</keyword>
<keyword id="KW-0520">NAD</keyword>
<keyword id="KW-1185">Reference proteome</keyword>
<keyword id="KW-0808">Transferase</keyword>
<keyword id="KW-0862">Zinc</keyword>
<reference key="1">
    <citation type="journal article" date="2003" name="Proc. Natl. Acad. Sci. U.S.A.">
        <title>The complete genome sequence of the Arabidopsis and tomato pathogen Pseudomonas syringae pv. tomato DC3000.</title>
        <authorList>
            <person name="Buell C.R."/>
            <person name="Joardar V."/>
            <person name="Lindeberg M."/>
            <person name="Selengut J."/>
            <person name="Paulsen I.T."/>
            <person name="Gwinn M.L."/>
            <person name="Dodson R.J."/>
            <person name="DeBoy R.T."/>
            <person name="Durkin A.S."/>
            <person name="Kolonay J.F."/>
            <person name="Madupu R."/>
            <person name="Daugherty S.C."/>
            <person name="Brinkac L.M."/>
            <person name="Beanan M.J."/>
            <person name="Haft D.H."/>
            <person name="Nelson W.C."/>
            <person name="Davidsen T.M."/>
            <person name="Zafar N."/>
            <person name="Zhou L."/>
            <person name="Liu J."/>
            <person name="Yuan Q."/>
            <person name="Khouri H.M."/>
            <person name="Fedorova N.B."/>
            <person name="Tran B."/>
            <person name="Russell D."/>
            <person name="Berry K.J."/>
            <person name="Utterback T.R."/>
            <person name="Van Aken S.E."/>
            <person name="Feldblyum T.V."/>
            <person name="D'Ascenzo M."/>
            <person name="Deng W.-L."/>
            <person name="Ramos A.R."/>
            <person name="Alfano J.R."/>
            <person name="Cartinhour S."/>
            <person name="Chatterjee A.K."/>
            <person name="Delaney T.P."/>
            <person name="Lazarowitz S.G."/>
            <person name="Martin G.B."/>
            <person name="Schneider D.J."/>
            <person name="Tang X."/>
            <person name="Bender C.L."/>
            <person name="White O."/>
            <person name="Fraser C.M."/>
            <person name="Collmer A."/>
        </authorList>
    </citation>
    <scope>NUCLEOTIDE SEQUENCE [LARGE SCALE GENOMIC DNA]</scope>
    <source>
        <strain>ATCC BAA-871 / DC3000</strain>
    </source>
</reference>
<accession>Q882K4</accession>
<proteinExistence type="inferred from homology"/>
<feature type="chain" id="PRO_0000110341" description="NAD-dependent protein deacetylase 3">
    <location>
        <begin position="1"/>
        <end position="281"/>
    </location>
</feature>
<feature type="domain" description="Deacetylase sirtuin-type" evidence="2">
    <location>
        <begin position="1"/>
        <end position="281"/>
    </location>
</feature>
<feature type="active site" description="Proton acceptor" evidence="2">
    <location>
        <position position="123"/>
    </location>
</feature>
<feature type="binding site" evidence="1">
    <location>
        <begin position="27"/>
        <end position="47"/>
    </location>
    <ligand>
        <name>NAD(+)</name>
        <dbReference type="ChEBI" id="CHEBI:57540"/>
    </ligand>
</feature>
<feature type="binding site" evidence="1">
    <location>
        <begin position="105"/>
        <end position="108"/>
    </location>
    <ligand>
        <name>NAD(+)</name>
        <dbReference type="ChEBI" id="CHEBI:57540"/>
    </ligand>
</feature>
<feature type="binding site" evidence="1">
    <location>
        <position position="131"/>
    </location>
    <ligand>
        <name>Zn(2+)</name>
        <dbReference type="ChEBI" id="CHEBI:29105"/>
    </ligand>
</feature>
<feature type="binding site" evidence="1">
    <location>
        <position position="134"/>
    </location>
    <ligand>
        <name>Zn(2+)</name>
        <dbReference type="ChEBI" id="CHEBI:29105"/>
    </ligand>
</feature>
<feature type="binding site" evidence="1">
    <location>
        <position position="182"/>
    </location>
    <ligand>
        <name>Zn(2+)</name>
        <dbReference type="ChEBI" id="CHEBI:29105"/>
    </ligand>
</feature>
<feature type="binding site" evidence="1">
    <location>
        <position position="185"/>
    </location>
    <ligand>
        <name>Zn(2+)</name>
        <dbReference type="ChEBI" id="CHEBI:29105"/>
    </ligand>
</feature>
<feature type="binding site" evidence="1">
    <location>
        <begin position="223"/>
        <end position="225"/>
    </location>
    <ligand>
        <name>NAD(+)</name>
        <dbReference type="ChEBI" id="CHEBI:57540"/>
    </ligand>
</feature>
<feature type="binding site" evidence="1">
    <location>
        <begin position="249"/>
        <end position="251"/>
    </location>
    <ligand>
        <name>NAD(+)</name>
        <dbReference type="ChEBI" id="CHEBI:57540"/>
    </ligand>
</feature>
<feature type="binding site" evidence="1">
    <location>
        <position position="267"/>
    </location>
    <ligand>
        <name>NAD(+)</name>
        <dbReference type="ChEBI" id="CHEBI:57540"/>
    </ligand>
</feature>